<organism>
    <name type="scientific">Prochlorococcus marinus (strain MIT 9215)</name>
    <dbReference type="NCBI Taxonomy" id="93060"/>
    <lineage>
        <taxon>Bacteria</taxon>
        <taxon>Bacillati</taxon>
        <taxon>Cyanobacteriota</taxon>
        <taxon>Cyanophyceae</taxon>
        <taxon>Synechococcales</taxon>
        <taxon>Prochlorococcaceae</taxon>
        <taxon>Prochlorococcus</taxon>
    </lineage>
</organism>
<accession>P0C8E6</accession>
<sequence length="77" mass="8938">METFFNNSFATLIAYIGIISTYLLVIPLFLFYWMNNRWNVMGKFERLGIYGLVFLFFPGLILFSPFLNLRPKGSGKG</sequence>
<proteinExistence type="inferred from homology"/>
<comment type="function">
    <text evidence="1">NDH-1 shuttles electrons from an unknown electron donor, via FMN and iron-sulfur (Fe-S) centers, to quinones in the respiratory and/or the photosynthetic chain. The immediate electron acceptor for the enzyme in this species is believed to be plastoquinone. Couples the redox reaction to proton translocation, and thus conserves the redox energy in a proton gradient. Cyanobacterial NDH-1 also plays a role in inorganic carbon-concentration (By similarity).</text>
</comment>
<comment type="catalytic activity">
    <reaction>
        <text>a plastoquinone + NADH + (n+1) H(+)(in) = a plastoquinol + NAD(+) + n H(+)(out)</text>
        <dbReference type="Rhea" id="RHEA:42608"/>
        <dbReference type="Rhea" id="RHEA-COMP:9561"/>
        <dbReference type="Rhea" id="RHEA-COMP:9562"/>
        <dbReference type="ChEBI" id="CHEBI:15378"/>
        <dbReference type="ChEBI" id="CHEBI:17757"/>
        <dbReference type="ChEBI" id="CHEBI:57540"/>
        <dbReference type="ChEBI" id="CHEBI:57945"/>
        <dbReference type="ChEBI" id="CHEBI:62192"/>
    </reaction>
</comment>
<comment type="catalytic activity">
    <reaction>
        <text>a plastoquinone + NADPH + (n+1) H(+)(in) = a plastoquinol + NADP(+) + n H(+)(out)</text>
        <dbReference type="Rhea" id="RHEA:42612"/>
        <dbReference type="Rhea" id="RHEA-COMP:9561"/>
        <dbReference type="Rhea" id="RHEA-COMP:9562"/>
        <dbReference type="ChEBI" id="CHEBI:15378"/>
        <dbReference type="ChEBI" id="CHEBI:17757"/>
        <dbReference type="ChEBI" id="CHEBI:57783"/>
        <dbReference type="ChEBI" id="CHEBI:58349"/>
        <dbReference type="ChEBI" id="CHEBI:62192"/>
    </reaction>
</comment>
<comment type="subunit">
    <text evidence="1">NDH-1 can be composed of about 15 different subunits; different subcomplexes with different compositions have been identified which probably have different functions.</text>
</comment>
<comment type="subcellular location">
    <subcellularLocation>
        <location evidence="1">Cellular thylakoid membrane</location>
        <topology evidence="1">Multi-pass membrane protein</topology>
    </subcellularLocation>
</comment>
<comment type="similarity">
    <text evidence="3">Belongs to the complex I NdhL subunit family.</text>
</comment>
<evidence type="ECO:0000250" key="1"/>
<evidence type="ECO:0000255" key="2"/>
<evidence type="ECO:0000305" key="3"/>
<reference key="1">
    <citation type="journal article" date="2007" name="PLoS Genet.">
        <title>Patterns and implications of gene gain and loss in the evolution of Prochlorococcus.</title>
        <authorList>
            <person name="Kettler G.C."/>
            <person name="Martiny A.C."/>
            <person name="Huang K."/>
            <person name="Zucker J."/>
            <person name="Coleman M.L."/>
            <person name="Rodrigue S."/>
            <person name="Chen F."/>
            <person name="Lapidus A."/>
            <person name="Ferriera S."/>
            <person name="Johnson J."/>
            <person name="Steglich C."/>
            <person name="Church G.M."/>
            <person name="Richardson P."/>
            <person name="Chisholm S.W."/>
        </authorList>
    </citation>
    <scope>NUCLEOTIDE SEQUENCE [LARGE SCALE GENOMIC DNA]</scope>
    <source>
        <strain>MIT 9215</strain>
    </source>
</reference>
<gene>
    <name type="primary">ndhL</name>
    <name type="ordered locus">P9215_06521.1</name>
</gene>
<name>NDHL_PROM2</name>
<dbReference type="EC" id="7.1.1.-"/>
<dbReference type="EMBL" id="CP000825">
    <property type="status" value="NOT_ANNOTATED_CDS"/>
    <property type="molecule type" value="Genomic_DNA"/>
</dbReference>
<dbReference type="RefSeq" id="WP_041484354.1">
    <property type="nucleotide sequence ID" value="NC_009840.1"/>
</dbReference>
<dbReference type="SMR" id="P0C8E6"/>
<dbReference type="OrthoDB" id="517549at2"/>
<dbReference type="Proteomes" id="UP000002014">
    <property type="component" value="Chromosome"/>
</dbReference>
<dbReference type="GO" id="GO:0031676">
    <property type="term" value="C:plasma membrane-derived thylakoid membrane"/>
    <property type="evidence" value="ECO:0007669"/>
    <property type="project" value="UniProtKB-SubCell"/>
</dbReference>
<dbReference type="GO" id="GO:0016655">
    <property type="term" value="F:oxidoreductase activity, acting on NAD(P)H, quinone or similar compound as acceptor"/>
    <property type="evidence" value="ECO:0007669"/>
    <property type="project" value="UniProtKB-UniRule"/>
</dbReference>
<dbReference type="GO" id="GO:0048038">
    <property type="term" value="F:quinone binding"/>
    <property type="evidence" value="ECO:0007669"/>
    <property type="project" value="UniProtKB-KW"/>
</dbReference>
<dbReference type="HAMAP" id="MF_01355">
    <property type="entry name" value="NDH1_NDH1L"/>
    <property type="match status" value="1"/>
</dbReference>
<dbReference type="InterPro" id="IPR019654">
    <property type="entry name" value="NADH-quinone_OxRdatse_su_L"/>
</dbReference>
<dbReference type="Pfam" id="PF10716">
    <property type="entry name" value="NdhL"/>
    <property type="match status" value="1"/>
</dbReference>
<feature type="chain" id="PRO_0000353674" description="NAD(P)H-quinone oxidoreductase subunit L">
    <location>
        <begin position="1"/>
        <end position="77"/>
    </location>
</feature>
<feature type="transmembrane region" description="Helical" evidence="2">
    <location>
        <begin position="12"/>
        <end position="32"/>
    </location>
</feature>
<feature type="transmembrane region" description="Helical" evidence="2">
    <location>
        <begin position="47"/>
        <end position="67"/>
    </location>
</feature>
<keyword id="KW-0472">Membrane</keyword>
<keyword id="KW-0520">NAD</keyword>
<keyword id="KW-0521">NADP</keyword>
<keyword id="KW-0618">Plastoquinone</keyword>
<keyword id="KW-0874">Quinone</keyword>
<keyword id="KW-0793">Thylakoid</keyword>
<keyword id="KW-1278">Translocase</keyword>
<keyword id="KW-0812">Transmembrane</keyword>
<keyword id="KW-1133">Transmembrane helix</keyword>
<keyword id="KW-0813">Transport</keyword>
<protein>
    <recommendedName>
        <fullName>NAD(P)H-quinone oxidoreductase subunit L</fullName>
        <ecNumber>7.1.1.-</ecNumber>
    </recommendedName>
    <alternativeName>
        <fullName>NAD(P)H dehydrogenase I subunit L</fullName>
    </alternativeName>
    <alternativeName>
        <fullName>NDH-1 subunit L</fullName>
    </alternativeName>
    <alternativeName>
        <fullName>NDH-L</fullName>
    </alternativeName>
</protein>